<evidence type="ECO:0000269" key="1">
    <source>
    </source>
</evidence>
<name>CUPC6_CANPG</name>
<reference key="1">
    <citation type="journal article" date="1999" name="Comp. Biochem. Physiol.">
        <title>Exoskeletal proteins from the crab, Cancer pagurus.</title>
        <authorList>
            <person name="Andersen S.O."/>
        </authorList>
    </citation>
    <scope>PROTEIN SEQUENCE</scope>
    <scope>MASS SPECTROMETRY</scope>
    <source>
        <tissue>Carapace cuticle</tissue>
    </source>
</reference>
<dbReference type="SMR" id="P81585"/>
<dbReference type="GO" id="GO:0042302">
    <property type="term" value="F:structural constituent of cuticle"/>
    <property type="evidence" value="ECO:0007669"/>
    <property type="project" value="UniProtKB-KW"/>
</dbReference>
<dbReference type="InterPro" id="IPR012539">
    <property type="entry name" value="Cuticle_1"/>
</dbReference>
<dbReference type="Pfam" id="PF08140">
    <property type="entry name" value="Cuticle_1"/>
    <property type="match status" value="1"/>
</dbReference>
<comment type="tissue specificity">
    <text>Calcified shell.</text>
</comment>
<comment type="mass spectrometry" mass="4337.2" method="Plasma desorption" evidence="1"/>
<proteinExistence type="evidence at protein level"/>
<feature type="chain" id="PRO_0000196166" description="Cuticle protein CP434">
    <location>
        <begin position="1"/>
        <end position="43"/>
    </location>
</feature>
<feature type="repeat" description="1">
    <location>
        <begin position="1"/>
        <end position="18"/>
    </location>
</feature>
<feature type="repeat" description="2">
    <location>
        <begin position="25"/>
        <end position="42"/>
    </location>
</feature>
<accession>P81585</accession>
<protein>
    <recommendedName>
        <fullName>Cuticle protein CP434</fullName>
        <shortName>CPCP434</shortName>
    </recommendedName>
</protein>
<keyword id="KW-0193">Cuticle</keyword>
<keyword id="KW-0903">Direct protein sequencing</keyword>
<keyword id="KW-0677">Repeat</keyword>
<organism>
    <name type="scientific">Cancer pagurus</name>
    <name type="common">Rock crab</name>
    <dbReference type="NCBI Taxonomy" id="6755"/>
    <lineage>
        <taxon>Eukaryota</taxon>
        <taxon>Metazoa</taxon>
        <taxon>Ecdysozoa</taxon>
        <taxon>Arthropoda</taxon>
        <taxon>Crustacea</taxon>
        <taxon>Multicrustacea</taxon>
        <taxon>Malacostraca</taxon>
        <taxon>Eumalacostraca</taxon>
        <taxon>Eucarida</taxon>
        <taxon>Decapoda</taxon>
        <taxon>Pleocyemata</taxon>
        <taxon>Brachyura</taxon>
        <taxon>Eubrachyura</taxon>
        <taxon>Cancroidea</taxon>
        <taxon>Cancridae</taxon>
        <taxon>Cancer</taxon>
    </lineage>
</organism>
<sequence length="43" mass="4338">ALVGPSGMILADGTPVQFPAHAKPVLTGPSGIVFSNGQNIQLH</sequence>